<proteinExistence type="inferred from homology"/>
<evidence type="ECO:0000250" key="1"/>
<evidence type="ECO:0000255" key="2">
    <source>
        <dbReference type="PROSITE-ProRule" id="PRU00405"/>
    </source>
</evidence>
<evidence type="ECO:0000256" key="3">
    <source>
        <dbReference type="SAM" id="MobiDB-lite"/>
    </source>
</evidence>
<evidence type="ECO:0000305" key="4"/>
<gene>
    <name type="primary">P</name>
</gene>
<sequence>MPQPLKQSLDQSKWLREAEKHLRELENLVDSNLEEEKLKPQLSMGEDVQSPGKGEPLHPNVRAPLSHVVRAATIDLPRLGNKLPAKHHLGKLSGLYQMKGCTFNPEWKVPDISDTHFDLQVLNECPSRNWKYLTPAKFWPKSISYFPVQAGVKAKYPDNVMQHESIVGKYLTRLYEAGILYKRISKHLVTFKGQPYKWEHQYLVKQHQIPDGATTRKINGRAENRRRGDPAKSISRPHDPKRGCNMVRQISNNRSSIRPCANNGGDKHSPTTRRLACWGGKASRINQSYSSRDSSAPVDARGRSESAGSLSSLSGRKAAGNHHHSTLINPSVETTARGRSTPGEQISARDTSALPESRASRACNKDSSIKEENVWYLRGNTSWPNRITGKLFLVDKNSRNTTEARLVVDFSQFSKGKNAMRFPRYWSPNLSTLRRILPVGMPRISLDLSQAFYHLPLNPASSSRLAVSDGQRVYYFRKAPMGVGLSPFLLHLFTTALGSEIARRFNVWTFTYMDDFLLCHPNARHLNSISHAVCTFLQELGIRINFDKTTPSPVTEIRFLGYQIDQKFMKIEEDRWKELRTVIKKIKVGAWYDWKCIQRFVGHLNFVLPFTKGNLEMLKPMYAAITNKVNFSFSSAYRTLLYKLTMGVCKLAIKPKSSVPLPRVATDATPTHGAISHITGGSAVFAFSKVRDIHIQELLMVCLAKLMIKPRCILTDSTFVCHKRYQTLPWHFAMLAKQLLSPMQLYFVPSKYNPADGPSRHKPPDWTALTYTPLSKAIYIPHRLCGT</sequence>
<organismHost>
    <name type="scientific">Anas</name>
    <name type="common">ducks</name>
    <dbReference type="NCBI Taxonomy" id="8835"/>
</organismHost>
<feature type="chain" id="PRO_0000222328" description="Protein P">
    <location>
        <begin position="1"/>
        <end position="787"/>
    </location>
</feature>
<feature type="domain" description="Reverse transcriptase" evidence="2">
    <location>
        <begin position="375"/>
        <end position="564"/>
    </location>
</feature>
<feature type="region of interest" description="Terminal protein domain (TP)" evidence="1">
    <location>
        <begin position="1"/>
        <end position="200"/>
    </location>
</feature>
<feature type="region of interest" description="Disordered" evidence="3">
    <location>
        <begin position="28"/>
        <end position="60"/>
    </location>
</feature>
<feature type="region of interest" description="Spacer" evidence="1">
    <location>
        <begin position="201"/>
        <end position="365"/>
    </location>
</feature>
<feature type="region of interest" description="Disordered" evidence="3">
    <location>
        <begin position="210"/>
        <end position="274"/>
    </location>
</feature>
<feature type="region of interest" description="Disordered" evidence="3">
    <location>
        <begin position="286"/>
        <end position="365"/>
    </location>
</feature>
<feature type="region of interest" description="Polymerase/reverse transcriptase domain (RT)" evidence="1">
    <location>
        <begin position="366"/>
        <end position="654"/>
    </location>
</feature>
<feature type="region of interest" description="RnaseH domain (RH)" evidence="1">
    <location>
        <begin position="655"/>
        <end position="787"/>
    </location>
</feature>
<feature type="compositionally biased region" description="Basic and acidic residues" evidence="3">
    <location>
        <begin position="220"/>
        <end position="242"/>
    </location>
</feature>
<feature type="compositionally biased region" description="Low complexity" evidence="3">
    <location>
        <begin position="305"/>
        <end position="318"/>
    </location>
</feature>
<feature type="compositionally biased region" description="Polar residues" evidence="3">
    <location>
        <begin position="326"/>
        <end position="350"/>
    </location>
</feature>
<feature type="binding site" evidence="2">
    <location>
        <position position="447"/>
    </location>
    <ligand>
        <name>Mg(2+)</name>
        <dbReference type="ChEBI" id="CHEBI:18420"/>
        <note>catalytic</note>
    </ligand>
</feature>
<feature type="binding site" evidence="2">
    <location>
        <position position="514"/>
    </location>
    <ligand>
        <name>Mg(2+)</name>
        <dbReference type="ChEBI" id="CHEBI:18420"/>
        <note>catalytic</note>
    </ligand>
</feature>
<feature type="binding site" evidence="2">
    <location>
        <position position="515"/>
    </location>
    <ligand>
        <name>Mg(2+)</name>
        <dbReference type="ChEBI" id="CHEBI:18420"/>
        <note>catalytic</note>
    </ligand>
</feature>
<feature type="site" description="Priming of reverse-transcription by covalently linking the first nucleotide of the (-)DNA" evidence="1">
    <location>
        <position position="96"/>
    </location>
</feature>
<protein>
    <recommendedName>
        <fullName>Protein P</fullName>
    </recommendedName>
    <domain>
        <recommendedName>
            <fullName>DNA-directed DNA polymerase</fullName>
            <ecNumber>2.7.7.7</ecNumber>
        </recommendedName>
    </domain>
    <domain>
        <recommendedName>
            <fullName>RNA-directed DNA polymerase</fullName>
            <ecNumber>2.7.7.49</ecNumber>
        </recommendedName>
    </domain>
    <domain>
        <recommendedName>
            <fullName>Ribonuclease H</fullName>
            <ecNumber>3.1.26.4</ecNumber>
        </recommendedName>
    </domain>
</protein>
<accession>P30028</accession>
<comment type="function">
    <text evidence="1">Multifunctional enzyme that converts the viral RNA genome into dsDNA in viral cytoplasmic capsids. This enzyme displays a DNA polymerase activity that can copy either DNA or RNA templates, and a ribonuclease H (RNase H) activity that cleaves the RNA strand of RNA-DNA heteroduplexes in a partially processive 3'- to 5'-endonucleasic mode. Neo-synthesized pregenomic RNA (pgRNA) are encapsidated together with the P protein, and reverse-transcribed inside the nucleocapsid. Initiation of reverse-transcription occurs first by binding the epsilon loop on the pgRNA genome, and is initiated by protein priming, thereby the 5'-end of (-)DNA is covalently linked to P protein. Partial (+)DNA is synthesized from the (-)DNA template and generates the relaxed circular DNA (RC-DNA) genome. After budding and infection, the RC-DNA migrates in the nucleus, and is converted into a plasmid-like covalently closed circular DNA (cccDNA). The activity of P protein does not seem to be necessary for cccDNA generation, and is presumably released from (+)DNA by host nuclear DNA repair machinery (By similarity).</text>
</comment>
<comment type="catalytic activity">
    <reaction evidence="2">
        <text>DNA(n) + a 2'-deoxyribonucleoside 5'-triphosphate = DNA(n+1) + diphosphate</text>
        <dbReference type="Rhea" id="RHEA:22508"/>
        <dbReference type="Rhea" id="RHEA-COMP:17339"/>
        <dbReference type="Rhea" id="RHEA-COMP:17340"/>
        <dbReference type="ChEBI" id="CHEBI:33019"/>
        <dbReference type="ChEBI" id="CHEBI:61560"/>
        <dbReference type="ChEBI" id="CHEBI:173112"/>
        <dbReference type="EC" id="2.7.7.7"/>
    </reaction>
</comment>
<comment type="catalytic activity">
    <reaction evidence="2">
        <text>DNA(n) + a 2'-deoxyribonucleoside 5'-triphosphate = DNA(n+1) + diphosphate</text>
        <dbReference type="Rhea" id="RHEA:22508"/>
        <dbReference type="Rhea" id="RHEA-COMP:17339"/>
        <dbReference type="Rhea" id="RHEA-COMP:17340"/>
        <dbReference type="ChEBI" id="CHEBI:33019"/>
        <dbReference type="ChEBI" id="CHEBI:61560"/>
        <dbReference type="ChEBI" id="CHEBI:173112"/>
        <dbReference type="EC" id="2.7.7.49"/>
    </reaction>
</comment>
<comment type="catalytic activity">
    <reaction>
        <text>Endonucleolytic cleavage to 5'-phosphomonoester.</text>
        <dbReference type="EC" id="3.1.26.4"/>
    </reaction>
</comment>
<comment type="activity regulation">
    <text>Activated by host HSP70 and HSP40 in vitro to be able to bind the epsilon loop of the pgRNA. Because deletion of the RNase H region renders the protein partly chaperone-independent, the chaperones may be needed indirectly to relieve occlusion of the RNA-binding site by this domain.</text>
</comment>
<comment type="domain">
    <text evidence="1">Terminal protein domain (TP) is hepadnavirus-specific. Spacer domain is highly variable and separates the TP and RT domains. Polymerase/reverse-transcriptase domain (RT) and ribonuclease H domain (RH) are similar to retrovirus reverse transcriptase/RNase H (By similarity).</text>
</comment>
<comment type="domain">
    <text evidence="1">The polymerase/reverse transcriptase (RT) and ribonuclease H (RH) domains are structured in five subdomains: finger, palm, thumb, connection and RNase H. Within the palm subdomain, the 'primer grip' region is thought to be involved in the positioning of the primer terminus for accommodating the incoming nucleotide. The RH domain stabilizes the association of RT with primer-template (By similarity).</text>
</comment>
<comment type="similarity">
    <text evidence="4">Belongs to the hepadnaviridae P protein family.</text>
</comment>
<name>DPOL_HPBDC</name>
<organism>
    <name type="scientific">Duck hepatitis B virus (strain China)</name>
    <name type="common">DHBV</name>
    <dbReference type="NCBI Taxonomy" id="31510"/>
    <lineage>
        <taxon>Viruses</taxon>
        <taxon>Riboviria</taxon>
        <taxon>Pararnavirae</taxon>
        <taxon>Artverviricota</taxon>
        <taxon>Revtraviricetes</taxon>
        <taxon>Blubervirales</taxon>
        <taxon>Hepadnaviridae</taxon>
        <taxon>Avihepadnavirus</taxon>
        <taxon>Duck hepatitis B virus</taxon>
    </lineage>
</organism>
<dbReference type="EC" id="2.7.7.7"/>
<dbReference type="EC" id="2.7.7.49"/>
<dbReference type="EC" id="3.1.26.4"/>
<dbReference type="EMBL" id="M21953">
    <property type="protein sequence ID" value="AAA45745.1"/>
    <property type="molecule type" value="Genomic_DNA"/>
</dbReference>
<dbReference type="PIR" id="S12841">
    <property type="entry name" value="JDVLW2"/>
</dbReference>
<dbReference type="Proteomes" id="UP000008119">
    <property type="component" value="Genome"/>
</dbReference>
<dbReference type="GO" id="GO:0003677">
    <property type="term" value="F:DNA binding"/>
    <property type="evidence" value="ECO:0007669"/>
    <property type="project" value="UniProtKB-KW"/>
</dbReference>
<dbReference type="GO" id="GO:0003887">
    <property type="term" value="F:DNA-directed DNA polymerase activity"/>
    <property type="evidence" value="ECO:0007669"/>
    <property type="project" value="UniProtKB-KW"/>
</dbReference>
<dbReference type="GO" id="GO:0046872">
    <property type="term" value="F:metal ion binding"/>
    <property type="evidence" value="ECO:0007669"/>
    <property type="project" value="UniProtKB-KW"/>
</dbReference>
<dbReference type="GO" id="GO:0003964">
    <property type="term" value="F:RNA-directed DNA polymerase activity"/>
    <property type="evidence" value="ECO:0007669"/>
    <property type="project" value="UniProtKB-KW"/>
</dbReference>
<dbReference type="GO" id="GO:0004523">
    <property type="term" value="F:RNA-DNA hybrid ribonuclease activity"/>
    <property type="evidence" value="ECO:0007669"/>
    <property type="project" value="UniProtKB-EC"/>
</dbReference>
<dbReference type="GO" id="GO:0006260">
    <property type="term" value="P:DNA replication"/>
    <property type="evidence" value="ECO:0007669"/>
    <property type="project" value="UniProtKB-KW"/>
</dbReference>
<dbReference type="FunFam" id="3.30.70.270:FF:000058">
    <property type="entry name" value="Protein P"/>
    <property type="match status" value="1"/>
</dbReference>
<dbReference type="Gene3D" id="3.30.70.270">
    <property type="match status" value="1"/>
</dbReference>
<dbReference type="Gene3D" id="3.10.10.10">
    <property type="entry name" value="HIV Type 1 Reverse Transcriptase, subunit A, domain 1"/>
    <property type="match status" value="1"/>
</dbReference>
<dbReference type="InterPro" id="IPR043502">
    <property type="entry name" value="DNA/RNA_pol_sf"/>
</dbReference>
<dbReference type="InterPro" id="IPR001462">
    <property type="entry name" value="DNApol_viral_C"/>
</dbReference>
<dbReference type="InterPro" id="IPR000201">
    <property type="entry name" value="DNApol_viral_N"/>
</dbReference>
<dbReference type="InterPro" id="IPR052055">
    <property type="entry name" value="Hepadnavirus_pol/RT"/>
</dbReference>
<dbReference type="InterPro" id="IPR043128">
    <property type="entry name" value="Rev_trsase/Diguanyl_cyclase"/>
</dbReference>
<dbReference type="InterPro" id="IPR000477">
    <property type="entry name" value="RT_dom"/>
</dbReference>
<dbReference type="PANTHER" id="PTHR33050">
    <property type="entry name" value="REVERSE TRANSCRIPTASE DOMAIN-CONTAINING PROTEIN"/>
    <property type="match status" value="1"/>
</dbReference>
<dbReference type="PANTHER" id="PTHR33050:SF7">
    <property type="entry name" value="RIBONUCLEASE H"/>
    <property type="match status" value="1"/>
</dbReference>
<dbReference type="Pfam" id="PF00336">
    <property type="entry name" value="DNA_pol_viral_C"/>
    <property type="match status" value="1"/>
</dbReference>
<dbReference type="Pfam" id="PF00242">
    <property type="entry name" value="DNA_pol_viral_N"/>
    <property type="match status" value="1"/>
</dbReference>
<dbReference type="Pfam" id="PF00078">
    <property type="entry name" value="RVT_1"/>
    <property type="match status" value="1"/>
</dbReference>
<dbReference type="SUPFAM" id="SSF56672">
    <property type="entry name" value="DNA/RNA polymerases"/>
    <property type="match status" value="1"/>
</dbReference>
<dbReference type="PROSITE" id="PS50878">
    <property type="entry name" value="RT_POL"/>
    <property type="match status" value="1"/>
</dbReference>
<keyword id="KW-0235">DNA replication</keyword>
<keyword id="KW-0238">DNA-binding</keyword>
<keyword id="KW-0239">DNA-directed DNA polymerase</keyword>
<keyword id="KW-0255">Endonuclease</keyword>
<keyword id="KW-0378">Hydrolase</keyword>
<keyword id="KW-0460">Magnesium</keyword>
<keyword id="KW-0479">Metal-binding</keyword>
<keyword id="KW-0511">Multifunctional enzyme</keyword>
<keyword id="KW-0540">Nuclease</keyword>
<keyword id="KW-0548">Nucleotidyltransferase</keyword>
<keyword id="KW-0695">RNA-directed DNA polymerase</keyword>
<keyword id="KW-0808">Transferase</keyword>
<reference key="1">
    <citation type="journal article" date="1990" name="Nucleic Acids Res.">
        <title>Complete nucleotide sequence of a Chinese duck hepatitis B virus.</title>
        <authorList>
            <person name="Tong S."/>
            <person name="Mattes F."/>
            <person name="Teubner K."/>
            <person name="Blum H.E."/>
        </authorList>
    </citation>
    <scope>NUCLEOTIDE SEQUENCE [GENOMIC DNA]</scope>
</reference>
<reference key="2">
    <citation type="journal article" date="2007" name="World J. Gastroenterol.">
        <title>Hepatitis B virus replication.</title>
        <authorList>
            <person name="Beck J."/>
            <person name="Nassal M."/>
        </authorList>
    </citation>
    <scope>REVIEW</scope>
</reference>